<organism>
    <name type="scientific">Methanocorpusculum labreanum (strain ATCC 43576 / DSM 4855 / Z)</name>
    <dbReference type="NCBI Taxonomy" id="410358"/>
    <lineage>
        <taxon>Archaea</taxon>
        <taxon>Methanobacteriati</taxon>
        <taxon>Methanobacteriota</taxon>
        <taxon>Stenosarchaea group</taxon>
        <taxon>Methanomicrobia</taxon>
        <taxon>Methanomicrobiales</taxon>
        <taxon>Methanocorpusculaceae</taxon>
        <taxon>Methanocorpusculum</taxon>
    </lineage>
</organism>
<proteinExistence type="inferred from homology"/>
<reference key="1">
    <citation type="journal article" date="2009" name="Stand. Genomic Sci.">
        <title>Complete genome sequence of Methanocorpusculum labreanum type strain Z.</title>
        <authorList>
            <person name="Anderson I.J."/>
            <person name="Sieprawska-Lupa M."/>
            <person name="Goltsman E."/>
            <person name="Lapidus A."/>
            <person name="Copeland A."/>
            <person name="Glavina Del Rio T."/>
            <person name="Tice H."/>
            <person name="Dalin E."/>
            <person name="Barry K."/>
            <person name="Pitluck S."/>
            <person name="Hauser L."/>
            <person name="Land M."/>
            <person name="Lucas S."/>
            <person name="Richardson P."/>
            <person name="Whitman W.B."/>
            <person name="Kyrpides N.C."/>
        </authorList>
    </citation>
    <scope>NUCLEOTIDE SEQUENCE [LARGE SCALE GENOMIC DNA]</scope>
    <source>
        <strain>ATCC 43576 / DSM 4855 / Z</strain>
    </source>
</reference>
<feature type="chain" id="PRO_1000058016" description="Phosphoglycerate kinase">
    <location>
        <begin position="1"/>
        <end position="405"/>
    </location>
</feature>
<feature type="binding site" evidence="1">
    <location>
        <begin position="21"/>
        <end position="23"/>
    </location>
    <ligand>
        <name>substrate</name>
    </ligand>
</feature>
<feature type="binding site" evidence="1">
    <location>
        <position position="38"/>
    </location>
    <ligand>
        <name>substrate</name>
    </ligand>
</feature>
<feature type="binding site" evidence="1">
    <location>
        <begin position="59"/>
        <end position="62"/>
    </location>
    <ligand>
        <name>substrate</name>
    </ligand>
</feature>
<feature type="binding site" evidence="1">
    <location>
        <position position="116"/>
    </location>
    <ligand>
        <name>substrate</name>
    </ligand>
</feature>
<feature type="binding site" evidence="1">
    <location>
        <position position="156"/>
    </location>
    <ligand>
        <name>substrate</name>
    </ligand>
</feature>
<feature type="binding site" evidence="1">
    <location>
        <position position="330"/>
    </location>
    <ligand>
        <name>ATP</name>
        <dbReference type="ChEBI" id="CHEBI:30616"/>
    </ligand>
</feature>
<feature type="binding site" evidence="1">
    <location>
        <begin position="355"/>
        <end position="358"/>
    </location>
    <ligand>
        <name>ATP</name>
        <dbReference type="ChEBI" id="CHEBI:30616"/>
    </ligand>
</feature>
<gene>
    <name evidence="1" type="primary">pgk</name>
    <name type="ordered locus">Mlab_1251</name>
</gene>
<protein>
    <recommendedName>
        <fullName evidence="1">Phosphoglycerate kinase</fullName>
        <ecNumber evidence="1">2.7.2.3</ecNumber>
    </recommendedName>
</protein>
<accession>A2SSW4</accession>
<name>PGK_METLZ</name>
<dbReference type="EC" id="2.7.2.3" evidence="1"/>
<dbReference type="EMBL" id="CP000559">
    <property type="protein sequence ID" value="ABN07420.1"/>
    <property type="molecule type" value="Genomic_DNA"/>
</dbReference>
<dbReference type="RefSeq" id="WP_011833623.1">
    <property type="nucleotide sequence ID" value="NC_008942.1"/>
</dbReference>
<dbReference type="SMR" id="A2SSW4"/>
<dbReference type="STRING" id="410358.Mlab_1251"/>
<dbReference type="GeneID" id="4794834"/>
<dbReference type="KEGG" id="mla:Mlab_1251"/>
<dbReference type="eggNOG" id="arCOG00496">
    <property type="taxonomic scope" value="Archaea"/>
</dbReference>
<dbReference type="HOGENOM" id="CLU_025427_0_2_2"/>
<dbReference type="OrthoDB" id="6575at2157"/>
<dbReference type="UniPathway" id="UPA00109">
    <property type="reaction ID" value="UER00185"/>
</dbReference>
<dbReference type="Proteomes" id="UP000000365">
    <property type="component" value="Chromosome"/>
</dbReference>
<dbReference type="GO" id="GO:0005829">
    <property type="term" value="C:cytosol"/>
    <property type="evidence" value="ECO:0007669"/>
    <property type="project" value="TreeGrafter"/>
</dbReference>
<dbReference type="GO" id="GO:0043531">
    <property type="term" value="F:ADP binding"/>
    <property type="evidence" value="ECO:0007669"/>
    <property type="project" value="TreeGrafter"/>
</dbReference>
<dbReference type="GO" id="GO:0005524">
    <property type="term" value="F:ATP binding"/>
    <property type="evidence" value="ECO:0007669"/>
    <property type="project" value="UniProtKB-KW"/>
</dbReference>
<dbReference type="GO" id="GO:0004618">
    <property type="term" value="F:phosphoglycerate kinase activity"/>
    <property type="evidence" value="ECO:0007669"/>
    <property type="project" value="UniProtKB-UniRule"/>
</dbReference>
<dbReference type="GO" id="GO:0006094">
    <property type="term" value="P:gluconeogenesis"/>
    <property type="evidence" value="ECO:0007669"/>
    <property type="project" value="TreeGrafter"/>
</dbReference>
<dbReference type="GO" id="GO:0006096">
    <property type="term" value="P:glycolytic process"/>
    <property type="evidence" value="ECO:0007669"/>
    <property type="project" value="UniProtKB-UniRule"/>
</dbReference>
<dbReference type="FunFam" id="3.40.50.1260:FF:000006">
    <property type="entry name" value="Phosphoglycerate kinase"/>
    <property type="match status" value="1"/>
</dbReference>
<dbReference type="FunFam" id="3.40.50.1260:FF:000012">
    <property type="entry name" value="Phosphoglycerate kinase"/>
    <property type="match status" value="1"/>
</dbReference>
<dbReference type="Gene3D" id="3.40.50.1260">
    <property type="entry name" value="Phosphoglycerate kinase, N-terminal domain"/>
    <property type="match status" value="2"/>
</dbReference>
<dbReference type="HAMAP" id="MF_00145">
    <property type="entry name" value="Phosphoglyc_kinase"/>
    <property type="match status" value="1"/>
</dbReference>
<dbReference type="InterPro" id="IPR001576">
    <property type="entry name" value="Phosphoglycerate_kinase"/>
</dbReference>
<dbReference type="InterPro" id="IPR015911">
    <property type="entry name" value="Phosphoglycerate_kinase_CS"/>
</dbReference>
<dbReference type="InterPro" id="IPR015824">
    <property type="entry name" value="Phosphoglycerate_kinase_N"/>
</dbReference>
<dbReference type="InterPro" id="IPR036043">
    <property type="entry name" value="Phosphoglycerate_kinase_sf"/>
</dbReference>
<dbReference type="PANTHER" id="PTHR11406">
    <property type="entry name" value="PHOSPHOGLYCERATE KINASE"/>
    <property type="match status" value="1"/>
</dbReference>
<dbReference type="PANTHER" id="PTHR11406:SF23">
    <property type="entry name" value="PHOSPHOGLYCERATE KINASE 1, CHLOROPLASTIC-RELATED"/>
    <property type="match status" value="1"/>
</dbReference>
<dbReference type="Pfam" id="PF00162">
    <property type="entry name" value="PGK"/>
    <property type="match status" value="1"/>
</dbReference>
<dbReference type="PIRSF" id="PIRSF000724">
    <property type="entry name" value="Pgk"/>
    <property type="match status" value="1"/>
</dbReference>
<dbReference type="PRINTS" id="PR00477">
    <property type="entry name" value="PHGLYCKINASE"/>
</dbReference>
<dbReference type="SUPFAM" id="SSF53748">
    <property type="entry name" value="Phosphoglycerate kinase"/>
    <property type="match status" value="1"/>
</dbReference>
<dbReference type="PROSITE" id="PS00111">
    <property type="entry name" value="PGLYCERATE_KINASE"/>
    <property type="match status" value="1"/>
</dbReference>
<evidence type="ECO:0000255" key="1">
    <source>
        <dbReference type="HAMAP-Rule" id="MF_00145"/>
    </source>
</evidence>
<comment type="catalytic activity">
    <reaction evidence="1">
        <text>(2R)-3-phosphoglycerate + ATP = (2R)-3-phospho-glyceroyl phosphate + ADP</text>
        <dbReference type="Rhea" id="RHEA:14801"/>
        <dbReference type="ChEBI" id="CHEBI:30616"/>
        <dbReference type="ChEBI" id="CHEBI:57604"/>
        <dbReference type="ChEBI" id="CHEBI:58272"/>
        <dbReference type="ChEBI" id="CHEBI:456216"/>
        <dbReference type="EC" id="2.7.2.3"/>
    </reaction>
</comment>
<comment type="pathway">
    <text evidence="1">Carbohydrate degradation; glycolysis; pyruvate from D-glyceraldehyde 3-phosphate: step 2/5.</text>
</comment>
<comment type="subunit">
    <text evidence="1">Monomer.</text>
</comment>
<comment type="subcellular location">
    <subcellularLocation>
        <location evidence="1">Cytoplasm</location>
    </subcellularLocation>
</comment>
<comment type="similarity">
    <text evidence="1">Belongs to the phosphoglycerate kinase family.</text>
</comment>
<keyword id="KW-0067">ATP-binding</keyword>
<keyword id="KW-0963">Cytoplasm</keyword>
<keyword id="KW-0324">Glycolysis</keyword>
<keyword id="KW-0418">Kinase</keyword>
<keyword id="KW-0547">Nucleotide-binding</keyword>
<keyword id="KW-1185">Reference proteome</keyword>
<keyword id="KW-0808">Transferase</keyword>
<sequence>MNFGTLADIETRGKTVLVRVDFNSPIDPSSNTILDDKRFREHIPTLQALEDARVVVLAHQSRPGKKDFTTLAAHADKLERLMNMPVTYVDDIFGTCAKHAVRDAHPGDIVLLENVRFSAEENLTMKPEDGAKTHLVRKLASMADLFVYDAFGTAHRSQPTITGLSYAMKTVAGLLMEKEVSMLSRVFTSAPKPVTFVLGGTKVDDSIAVAGNVLANKTADKVAIIGVVANVFYLAKGIDIGEPSRNLIHMLGYDDEVAKAKTILDSYPDKVLLPEYVAVKEHDERKEYPITRVPKDCPILDMGTESIVQFSKALRNSGSIVFNGPAGVFEEAKFASGTFELLRAAANVDFSVCGGGHTAAVIEQLGLEPQYSHLSTGGGACIEFLTGKKLPAIAALEESWKKFGN</sequence>